<protein>
    <recommendedName>
        <fullName>Uncharacterized protein T20B12.3</fullName>
    </recommendedName>
</protein>
<organism>
    <name type="scientific">Caenorhabditis elegans</name>
    <dbReference type="NCBI Taxonomy" id="6239"/>
    <lineage>
        <taxon>Eukaryota</taxon>
        <taxon>Metazoa</taxon>
        <taxon>Ecdysozoa</taxon>
        <taxon>Nematoda</taxon>
        <taxon>Chromadorea</taxon>
        <taxon>Rhabditida</taxon>
        <taxon>Rhabditina</taxon>
        <taxon>Rhabditomorpha</taxon>
        <taxon>Rhabditoidea</taxon>
        <taxon>Rhabditidae</taxon>
        <taxon>Peloderinae</taxon>
        <taxon>Caenorhabditis</taxon>
    </lineage>
</organism>
<keyword id="KW-1185">Reference proteome</keyword>
<comment type="similarity">
    <text evidence="2">Belongs to the CBF/MAK21 family.</text>
</comment>
<accession>P41843</accession>
<evidence type="ECO:0000256" key="1">
    <source>
        <dbReference type="SAM" id="MobiDB-lite"/>
    </source>
</evidence>
<evidence type="ECO:0000305" key="2"/>
<gene>
    <name type="ORF">T20B12.3</name>
</gene>
<reference key="1">
    <citation type="journal article" date="1998" name="Science">
        <title>Genome sequence of the nematode C. elegans: a platform for investigating biology.</title>
        <authorList>
            <consortium name="The C. elegans sequencing consortium"/>
        </authorList>
    </citation>
    <scope>NUCLEOTIDE SEQUENCE [LARGE SCALE GENOMIC DNA]</scope>
    <source>
        <strain>Bristol N2</strain>
    </source>
</reference>
<dbReference type="EMBL" id="FO081094">
    <property type="protein sequence ID" value="CCD69072.1"/>
    <property type="molecule type" value="Genomic_DNA"/>
</dbReference>
<dbReference type="PIR" id="T16903">
    <property type="entry name" value="T16903"/>
</dbReference>
<dbReference type="RefSeq" id="NP_498634.1">
    <property type="nucleotide sequence ID" value="NM_066233.6"/>
</dbReference>
<dbReference type="SMR" id="P41843"/>
<dbReference type="BioGRID" id="41262">
    <property type="interactions" value="5"/>
</dbReference>
<dbReference type="FunCoup" id="P41843">
    <property type="interactions" value="1384"/>
</dbReference>
<dbReference type="IntAct" id="P41843">
    <property type="interactions" value="1"/>
</dbReference>
<dbReference type="MINT" id="P41843"/>
<dbReference type="STRING" id="6239.T20B12.3.1"/>
<dbReference type="PaxDb" id="6239-T20B12.3"/>
<dbReference type="PeptideAtlas" id="P41843"/>
<dbReference type="EnsemblMetazoa" id="T20B12.3.1">
    <property type="protein sequence ID" value="T20B12.3.1"/>
    <property type="gene ID" value="WBGene00020601"/>
</dbReference>
<dbReference type="GeneID" id="176053"/>
<dbReference type="KEGG" id="cel:CELE_T20B12.3"/>
<dbReference type="UCSC" id="T20B12.3">
    <property type="organism name" value="c. elegans"/>
</dbReference>
<dbReference type="AGR" id="WB:WBGene00020601"/>
<dbReference type="CTD" id="176053"/>
<dbReference type="WormBase" id="T20B12.3">
    <property type="protein sequence ID" value="CE01409"/>
    <property type="gene ID" value="WBGene00020601"/>
</dbReference>
<dbReference type="eggNOG" id="KOG2154">
    <property type="taxonomic scope" value="Eukaryota"/>
</dbReference>
<dbReference type="GeneTree" id="ENSGT00390000016776"/>
<dbReference type="HOGENOM" id="CLU_560919_0_0_1"/>
<dbReference type="InParanoid" id="P41843"/>
<dbReference type="OMA" id="EHNFEYP"/>
<dbReference type="OrthoDB" id="275876at2759"/>
<dbReference type="PhylomeDB" id="P41843"/>
<dbReference type="Reactome" id="R-CEL-6791226">
    <property type="pathway name" value="Major pathway of rRNA processing in the nucleolus and cytosol"/>
</dbReference>
<dbReference type="PRO" id="PR:P41843"/>
<dbReference type="Proteomes" id="UP000001940">
    <property type="component" value="Chromosome III"/>
</dbReference>
<dbReference type="Bgee" id="WBGene00020601">
    <property type="expression patterns" value="Expressed in germ line (C elegans) and 4 other cell types or tissues"/>
</dbReference>
<dbReference type="GO" id="GO:0030692">
    <property type="term" value="C:Noc4p-Nop14p complex"/>
    <property type="evidence" value="ECO:0000318"/>
    <property type="project" value="GO_Central"/>
</dbReference>
<dbReference type="GO" id="GO:0005730">
    <property type="term" value="C:nucleolus"/>
    <property type="evidence" value="ECO:0000318"/>
    <property type="project" value="GO_Central"/>
</dbReference>
<dbReference type="GO" id="GO:0032040">
    <property type="term" value="C:small-subunit processome"/>
    <property type="evidence" value="ECO:0000318"/>
    <property type="project" value="GO_Central"/>
</dbReference>
<dbReference type="GO" id="GO:0042254">
    <property type="term" value="P:ribosome biogenesis"/>
    <property type="evidence" value="ECO:0007669"/>
    <property type="project" value="InterPro"/>
</dbReference>
<dbReference type="InterPro" id="IPR005612">
    <property type="entry name" value="CCAAT-binding_factor"/>
</dbReference>
<dbReference type="InterPro" id="IPR027193">
    <property type="entry name" value="Noc4"/>
</dbReference>
<dbReference type="PANTHER" id="PTHR12455">
    <property type="entry name" value="NUCLEOLAR COMPLEX PROTEIN 4"/>
    <property type="match status" value="1"/>
</dbReference>
<dbReference type="PANTHER" id="PTHR12455:SF0">
    <property type="entry name" value="NUCLEOLAR COMPLEX PROTEIN 4 HOMOLOG"/>
    <property type="match status" value="1"/>
</dbReference>
<dbReference type="Pfam" id="PF03914">
    <property type="entry name" value="CBF"/>
    <property type="match status" value="1"/>
</dbReference>
<sequence length="504" mass="58515">MDDDLDQFFHDDAEQNADFSDDGSEDEAPDNVDVNYELEREEPKSKSVAEFTKFLQECEYPDDIIKYFKTIKFFEKDAKTGDIVSTKSLKFTVTGFIQYLFGTKRIQRPVLRGIAKIFGRYDIFHLISPELVKSITHLKETRTTAWFNLFNFLSFVPHPTDRVTKPLFRQFCVRTPFNDKSMKKRKLTWISTDYDNVWMAVMNGKISDKLTLKLIPYITQNVISKLKAPFKSADFFFKMFDKTDYHGILSLGAIFRLISEHNFEYPKFYDKVYSLTNPSLLYMSQKESILTLLDSFLSSTHLPTYITASFLKRLSRCLLLAPIDAQEPILGLIRNLVIRHPNCSELVHREVPQTLYDDPFDNDETDLHKTRALESSLWEMKLLQCHWNQSVRKRAHFVDKSIQKIESYVRFRCTDELFSVNMAKSFGGEDGEAEKYRKLQDGDEDEEGTGKPEPKKARRKGFGGKFAPKHEEKVTRAVGVNSEAPKGILDRQVPIIDVPTLWKI</sequence>
<proteinExistence type="inferred from homology"/>
<name>YO93_CAEEL</name>
<feature type="chain" id="PRO_0000173493" description="Uncharacterized protein T20B12.3">
    <location>
        <begin position="1"/>
        <end position="504"/>
    </location>
</feature>
<feature type="region of interest" description="Disordered" evidence="1">
    <location>
        <begin position="431"/>
        <end position="483"/>
    </location>
</feature>